<comment type="function">
    <text evidence="1">Displays ATPase and GTPase activities.</text>
</comment>
<comment type="similarity">
    <text evidence="1">Belongs to the RapZ-like family.</text>
</comment>
<keyword id="KW-0067">ATP-binding</keyword>
<keyword id="KW-0342">GTP-binding</keyword>
<keyword id="KW-0547">Nucleotide-binding</keyword>
<evidence type="ECO:0000255" key="1">
    <source>
        <dbReference type="HAMAP-Rule" id="MF_00636"/>
    </source>
</evidence>
<reference key="1">
    <citation type="journal article" date="2007" name="Genome Biol.">
        <title>Characterization and modeling of the Haemophilus influenzae core and supragenomes based on the complete genomic sequences of Rd and 12 clinical nontypeable strains.</title>
        <authorList>
            <person name="Hogg J.S."/>
            <person name="Hu F.Z."/>
            <person name="Janto B."/>
            <person name="Boissy R."/>
            <person name="Hayes J."/>
            <person name="Keefe R."/>
            <person name="Post J.C."/>
            <person name="Ehrlich G.D."/>
        </authorList>
    </citation>
    <scope>NUCLEOTIDE SEQUENCE [LARGE SCALE GENOMIC DNA]</scope>
    <source>
        <strain>PittEE</strain>
    </source>
</reference>
<name>Y6315_HAEIE</name>
<accession>A5UCW1</accession>
<sequence>MEIIIISGRSGAGKSVALRALEDTGYYCVDNIPLDLLPQLTDILSQSQSSVAISLDIRNIPNSAHSLKQTLSTLQKHHQIKIIFLEADRATLIRRYSDSRRLHPLSLKDLSLEAAIDEEYRYLEPLIQHANLILDTTHLSTHSLAERLREFLRGNSEKELKIIVESFGFKYGIPLDADYVFDVRFLPNPHWDPTLRPMTGLEAPVAEFLNSHTEVNEFIYLTRHYIDTWLPMLEKNNRSYLTIAIGCTGGKHRSVYIAQQLGEYFQAKGKTVKIQHKSLERNKKIIKSAVIKTLFLLTALFLHAHRLYNFTRITA</sequence>
<gene>
    <name type="ordered locus">CGSHiEE_06315</name>
</gene>
<feature type="chain" id="PRO_1000056824" description="Nucleotide-binding protein CGSHiEE_06315">
    <location>
        <begin position="1"/>
        <end position="315"/>
    </location>
</feature>
<feature type="binding site" evidence="1">
    <location>
        <begin position="8"/>
        <end position="15"/>
    </location>
    <ligand>
        <name>ATP</name>
        <dbReference type="ChEBI" id="CHEBI:30616"/>
    </ligand>
</feature>
<feature type="binding site" evidence="1">
    <location>
        <begin position="56"/>
        <end position="59"/>
    </location>
    <ligand>
        <name>GTP</name>
        <dbReference type="ChEBI" id="CHEBI:37565"/>
    </ligand>
</feature>
<dbReference type="EMBL" id="CP000671">
    <property type="protein sequence ID" value="ABQ98612.1"/>
    <property type="molecule type" value="Genomic_DNA"/>
</dbReference>
<dbReference type="SMR" id="A5UCW1"/>
<dbReference type="KEGG" id="hip:CGSHiEE_06315"/>
<dbReference type="HOGENOM" id="CLU_059558_1_1_6"/>
<dbReference type="GO" id="GO:0005524">
    <property type="term" value="F:ATP binding"/>
    <property type="evidence" value="ECO:0007669"/>
    <property type="project" value="UniProtKB-UniRule"/>
</dbReference>
<dbReference type="GO" id="GO:0005525">
    <property type="term" value="F:GTP binding"/>
    <property type="evidence" value="ECO:0007669"/>
    <property type="project" value="UniProtKB-UniRule"/>
</dbReference>
<dbReference type="Gene3D" id="3.40.50.300">
    <property type="entry name" value="P-loop containing nucleotide triphosphate hydrolases"/>
    <property type="match status" value="1"/>
</dbReference>
<dbReference type="HAMAP" id="MF_00636">
    <property type="entry name" value="RapZ_like"/>
    <property type="match status" value="1"/>
</dbReference>
<dbReference type="InterPro" id="IPR027417">
    <property type="entry name" value="P-loop_NTPase"/>
</dbReference>
<dbReference type="InterPro" id="IPR005337">
    <property type="entry name" value="RapZ-like"/>
</dbReference>
<dbReference type="InterPro" id="IPR053930">
    <property type="entry name" value="RapZ-like_N"/>
</dbReference>
<dbReference type="InterPro" id="IPR053931">
    <property type="entry name" value="RapZ_C"/>
</dbReference>
<dbReference type="NCBIfam" id="NF003828">
    <property type="entry name" value="PRK05416.1"/>
    <property type="match status" value="1"/>
</dbReference>
<dbReference type="PANTHER" id="PTHR30448">
    <property type="entry name" value="RNASE ADAPTER PROTEIN RAPZ"/>
    <property type="match status" value="1"/>
</dbReference>
<dbReference type="PANTHER" id="PTHR30448:SF0">
    <property type="entry name" value="RNASE ADAPTER PROTEIN RAPZ"/>
    <property type="match status" value="1"/>
</dbReference>
<dbReference type="Pfam" id="PF22740">
    <property type="entry name" value="PapZ_C"/>
    <property type="match status" value="1"/>
</dbReference>
<dbReference type="Pfam" id="PF03668">
    <property type="entry name" value="RapZ-like_N"/>
    <property type="match status" value="1"/>
</dbReference>
<dbReference type="PIRSF" id="PIRSF005052">
    <property type="entry name" value="P-loopkin"/>
    <property type="match status" value="1"/>
</dbReference>
<dbReference type="SUPFAM" id="SSF52540">
    <property type="entry name" value="P-loop containing nucleoside triphosphate hydrolases"/>
    <property type="match status" value="1"/>
</dbReference>
<organism>
    <name type="scientific">Haemophilus influenzae (strain PittEE)</name>
    <dbReference type="NCBI Taxonomy" id="374930"/>
    <lineage>
        <taxon>Bacteria</taxon>
        <taxon>Pseudomonadati</taxon>
        <taxon>Pseudomonadota</taxon>
        <taxon>Gammaproteobacteria</taxon>
        <taxon>Pasteurellales</taxon>
        <taxon>Pasteurellaceae</taxon>
        <taxon>Haemophilus</taxon>
    </lineage>
</organism>
<protein>
    <recommendedName>
        <fullName evidence="1">Nucleotide-binding protein CGSHiEE_06315</fullName>
    </recommendedName>
</protein>
<proteinExistence type="inferred from homology"/>